<comment type="function">
    <text evidence="1">Allows the formation of correctly charged Gln-tRNA(Gln) through the transamidation of misacylated Glu-tRNA(Gln) in organisms which lack glutaminyl-tRNA synthetase. The reaction takes place in the presence of glutamine and ATP through an activated gamma-phospho-Glu-tRNA(Gln).</text>
</comment>
<comment type="catalytic activity">
    <reaction evidence="1">
        <text>L-glutamyl-tRNA(Gln) + L-glutamine + ATP + H2O = L-glutaminyl-tRNA(Gln) + L-glutamate + ADP + phosphate + H(+)</text>
        <dbReference type="Rhea" id="RHEA:17521"/>
        <dbReference type="Rhea" id="RHEA-COMP:9681"/>
        <dbReference type="Rhea" id="RHEA-COMP:9684"/>
        <dbReference type="ChEBI" id="CHEBI:15377"/>
        <dbReference type="ChEBI" id="CHEBI:15378"/>
        <dbReference type="ChEBI" id="CHEBI:29985"/>
        <dbReference type="ChEBI" id="CHEBI:30616"/>
        <dbReference type="ChEBI" id="CHEBI:43474"/>
        <dbReference type="ChEBI" id="CHEBI:58359"/>
        <dbReference type="ChEBI" id="CHEBI:78520"/>
        <dbReference type="ChEBI" id="CHEBI:78521"/>
        <dbReference type="ChEBI" id="CHEBI:456216"/>
        <dbReference type="EC" id="6.3.5.7"/>
    </reaction>
</comment>
<comment type="subunit">
    <text evidence="1">Heterotrimer of A, B and C subunits.</text>
</comment>
<comment type="similarity">
    <text evidence="1">Belongs to the amidase family. GatA subfamily.</text>
</comment>
<sequence>MTELKNELIRHSAADLAAKLASREVTAVEVTQAHLDRIADVDGQVNAFLHVNSEEALAVAAEVDAARAAGGSAAEELHALAGVPIAVKDLIVTIGQPTTAGSKILEGWHSPYDATVVKKLRAAKMPILGKTNLDEFAMGSSTEHSAYGPTRNPWDLDRIPGGSGGGSAAAVAAFEAPLALGTDTGGSIRQPGAVTGTVGVKPTYGAVSRYGAIAMASSLDQIGPVSRTVLDSALLQEVIGGHDPFDSTSLTDPFNDLVAAARVGNVAGMKIGIVKELHGEGYQAGVENRFNESLQLLKDAGAEIVEVSCPNLKYALGAYYLIMPSEVSSNLAKFDGVRFGMRVLPKDGPMTIERVMGATRAAGFGDEVKRRIILGTYALSAGYYDAYYGSAQKVRTLIQRDFDAAFAKADVLISPTAPTTAFKLGEKLDDPLAMYLNDVATIPANLAGIPGLSLPGGLADEDGLPVGIQLLAPARQDARLYRVGAVLESILEEKWGGPILAQAPDLKTAVLGAVSTTAGGSN</sequence>
<evidence type="ECO:0000255" key="1">
    <source>
        <dbReference type="HAMAP-Rule" id="MF_00120"/>
    </source>
</evidence>
<protein>
    <recommendedName>
        <fullName evidence="1">Glutamyl-tRNA(Gln) amidotransferase subunit A</fullName>
        <shortName evidence="1">Glu-ADT subunit A</shortName>
        <ecNumber evidence="1">6.3.5.7</ecNumber>
    </recommendedName>
</protein>
<accession>A1R4R1</accession>
<organism>
    <name type="scientific">Paenarthrobacter aurescens (strain TC1)</name>
    <dbReference type="NCBI Taxonomy" id="290340"/>
    <lineage>
        <taxon>Bacteria</taxon>
        <taxon>Bacillati</taxon>
        <taxon>Actinomycetota</taxon>
        <taxon>Actinomycetes</taxon>
        <taxon>Micrococcales</taxon>
        <taxon>Micrococcaceae</taxon>
        <taxon>Paenarthrobacter</taxon>
    </lineage>
</organism>
<gene>
    <name evidence="1" type="primary">gatA</name>
    <name type="ordered locus">AAur_1449</name>
</gene>
<proteinExistence type="inferred from homology"/>
<name>GATA_PAEAT</name>
<keyword id="KW-0067">ATP-binding</keyword>
<keyword id="KW-0436">Ligase</keyword>
<keyword id="KW-0547">Nucleotide-binding</keyword>
<keyword id="KW-0648">Protein biosynthesis</keyword>
<dbReference type="EC" id="6.3.5.7" evidence="1"/>
<dbReference type="EMBL" id="CP000474">
    <property type="protein sequence ID" value="ABM09114.1"/>
    <property type="molecule type" value="Genomic_DNA"/>
</dbReference>
<dbReference type="RefSeq" id="WP_011774170.1">
    <property type="nucleotide sequence ID" value="NC_008711.1"/>
</dbReference>
<dbReference type="SMR" id="A1R4R1"/>
<dbReference type="STRING" id="290340.AAur_1449"/>
<dbReference type="KEGG" id="aau:AAur_1449"/>
<dbReference type="eggNOG" id="COG0154">
    <property type="taxonomic scope" value="Bacteria"/>
</dbReference>
<dbReference type="HOGENOM" id="CLU_009600_0_3_11"/>
<dbReference type="OrthoDB" id="9811471at2"/>
<dbReference type="Proteomes" id="UP000000637">
    <property type="component" value="Chromosome"/>
</dbReference>
<dbReference type="GO" id="GO:0030956">
    <property type="term" value="C:glutamyl-tRNA(Gln) amidotransferase complex"/>
    <property type="evidence" value="ECO:0007669"/>
    <property type="project" value="InterPro"/>
</dbReference>
<dbReference type="GO" id="GO:0005524">
    <property type="term" value="F:ATP binding"/>
    <property type="evidence" value="ECO:0007669"/>
    <property type="project" value="UniProtKB-KW"/>
</dbReference>
<dbReference type="GO" id="GO:0050567">
    <property type="term" value="F:glutaminyl-tRNA synthase (glutamine-hydrolyzing) activity"/>
    <property type="evidence" value="ECO:0007669"/>
    <property type="project" value="UniProtKB-UniRule"/>
</dbReference>
<dbReference type="GO" id="GO:0006412">
    <property type="term" value="P:translation"/>
    <property type="evidence" value="ECO:0007669"/>
    <property type="project" value="UniProtKB-UniRule"/>
</dbReference>
<dbReference type="Gene3D" id="3.90.1300.10">
    <property type="entry name" value="Amidase signature (AS) domain"/>
    <property type="match status" value="1"/>
</dbReference>
<dbReference type="HAMAP" id="MF_00120">
    <property type="entry name" value="GatA"/>
    <property type="match status" value="1"/>
</dbReference>
<dbReference type="InterPro" id="IPR000120">
    <property type="entry name" value="Amidase"/>
</dbReference>
<dbReference type="InterPro" id="IPR020556">
    <property type="entry name" value="Amidase_CS"/>
</dbReference>
<dbReference type="InterPro" id="IPR023631">
    <property type="entry name" value="Amidase_dom"/>
</dbReference>
<dbReference type="InterPro" id="IPR036928">
    <property type="entry name" value="AS_sf"/>
</dbReference>
<dbReference type="InterPro" id="IPR004412">
    <property type="entry name" value="GatA"/>
</dbReference>
<dbReference type="NCBIfam" id="TIGR00132">
    <property type="entry name" value="gatA"/>
    <property type="match status" value="1"/>
</dbReference>
<dbReference type="PANTHER" id="PTHR11895:SF151">
    <property type="entry name" value="GLUTAMYL-TRNA(GLN) AMIDOTRANSFERASE SUBUNIT A"/>
    <property type="match status" value="1"/>
</dbReference>
<dbReference type="PANTHER" id="PTHR11895">
    <property type="entry name" value="TRANSAMIDASE"/>
    <property type="match status" value="1"/>
</dbReference>
<dbReference type="Pfam" id="PF01425">
    <property type="entry name" value="Amidase"/>
    <property type="match status" value="1"/>
</dbReference>
<dbReference type="SUPFAM" id="SSF75304">
    <property type="entry name" value="Amidase signature (AS) enzymes"/>
    <property type="match status" value="1"/>
</dbReference>
<dbReference type="PROSITE" id="PS00571">
    <property type="entry name" value="AMIDASES"/>
    <property type="match status" value="1"/>
</dbReference>
<reference key="1">
    <citation type="journal article" date="2006" name="PLoS Genet.">
        <title>Secrets of soil survival revealed by the genome sequence of Arthrobacter aurescens TC1.</title>
        <authorList>
            <person name="Mongodin E.F."/>
            <person name="Shapir N."/>
            <person name="Daugherty S.C."/>
            <person name="DeBoy R.T."/>
            <person name="Emerson J.B."/>
            <person name="Shvartzbeyn A."/>
            <person name="Radune D."/>
            <person name="Vamathevan J."/>
            <person name="Riggs F."/>
            <person name="Grinberg V."/>
            <person name="Khouri H.M."/>
            <person name="Wackett L.P."/>
            <person name="Nelson K.E."/>
            <person name="Sadowsky M.J."/>
        </authorList>
    </citation>
    <scope>NUCLEOTIDE SEQUENCE [LARGE SCALE GENOMIC DNA]</scope>
    <source>
        <strain>TC1</strain>
    </source>
</reference>
<feature type="chain" id="PRO_1000076119" description="Glutamyl-tRNA(Gln) amidotransferase subunit A">
    <location>
        <begin position="1"/>
        <end position="522"/>
    </location>
</feature>
<feature type="active site" description="Charge relay system" evidence="1">
    <location>
        <position position="88"/>
    </location>
</feature>
<feature type="active site" description="Charge relay system" evidence="1">
    <location>
        <position position="163"/>
    </location>
</feature>
<feature type="active site" description="Acyl-ester intermediate" evidence="1">
    <location>
        <position position="187"/>
    </location>
</feature>